<evidence type="ECO:0000256" key="1">
    <source>
        <dbReference type="SAM" id="MobiDB-lite"/>
    </source>
</evidence>
<name>Y8118_DICDI</name>
<gene>
    <name type="ORF">DDB_G0288805</name>
</gene>
<organism>
    <name type="scientific">Dictyostelium discoideum</name>
    <name type="common">Social amoeba</name>
    <dbReference type="NCBI Taxonomy" id="44689"/>
    <lineage>
        <taxon>Eukaryota</taxon>
        <taxon>Amoebozoa</taxon>
        <taxon>Evosea</taxon>
        <taxon>Eumycetozoa</taxon>
        <taxon>Dictyostelia</taxon>
        <taxon>Dictyosteliales</taxon>
        <taxon>Dictyosteliaceae</taxon>
        <taxon>Dictyostelium</taxon>
    </lineage>
</organism>
<reference key="1">
    <citation type="journal article" date="2005" name="Nature">
        <title>The genome of the social amoeba Dictyostelium discoideum.</title>
        <authorList>
            <person name="Eichinger L."/>
            <person name="Pachebat J.A."/>
            <person name="Gloeckner G."/>
            <person name="Rajandream M.A."/>
            <person name="Sucgang R."/>
            <person name="Berriman M."/>
            <person name="Song J."/>
            <person name="Olsen R."/>
            <person name="Szafranski K."/>
            <person name="Xu Q."/>
            <person name="Tunggal B."/>
            <person name="Kummerfeld S."/>
            <person name="Madera M."/>
            <person name="Konfortov B.A."/>
            <person name="Rivero F."/>
            <person name="Bankier A.T."/>
            <person name="Lehmann R."/>
            <person name="Hamlin N."/>
            <person name="Davies R."/>
            <person name="Gaudet P."/>
            <person name="Fey P."/>
            <person name="Pilcher K."/>
            <person name="Chen G."/>
            <person name="Saunders D."/>
            <person name="Sodergren E.J."/>
            <person name="Davis P."/>
            <person name="Kerhornou A."/>
            <person name="Nie X."/>
            <person name="Hall N."/>
            <person name="Anjard C."/>
            <person name="Hemphill L."/>
            <person name="Bason N."/>
            <person name="Farbrother P."/>
            <person name="Desany B."/>
            <person name="Just E."/>
            <person name="Morio T."/>
            <person name="Rost R."/>
            <person name="Churcher C.M."/>
            <person name="Cooper J."/>
            <person name="Haydock S."/>
            <person name="van Driessche N."/>
            <person name="Cronin A."/>
            <person name="Goodhead I."/>
            <person name="Muzny D.M."/>
            <person name="Mourier T."/>
            <person name="Pain A."/>
            <person name="Lu M."/>
            <person name="Harper D."/>
            <person name="Lindsay R."/>
            <person name="Hauser H."/>
            <person name="James K.D."/>
            <person name="Quiles M."/>
            <person name="Madan Babu M."/>
            <person name="Saito T."/>
            <person name="Buchrieser C."/>
            <person name="Wardroper A."/>
            <person name="Felder M."/>
            <person name="Thangavelu M."/>
            <person name="Johnson D."/>
            <person name="Knights A."/>
            <person name="Loulseged H."/>
            <person name="Mungall K.L."/>
            <person name="Oliver K."/>
            <person name="Price C."/>
            <person name="Quail M.A."/>
            <person name="Urushihara H."/>
            <person name="Hernandez J."/>
            <person name="Rabbinowitsch E."/>
            <person name="Steffen D."/>
            <person name="Sanders M."/>
            <person name="Ma J."/>
            <person name="Kohara Y."/>
            <person name="Sharp S."/>
            <person name="Simmonds M.N."/>
            <person name="Spiegler S."/>
            <person name="Tivey A."/>
            <person name="Sugano S."/>
            <person name="White B."/>
            <person name="Walker D."/>
            <person name="Woodward J.R."/>
            <person name="Winckler T."/>
            <person name="Tanaka Y."/>
            <person name="Shaulsky G."/>
            <person name="Schleicher M."/>
            <person name="Weinstock G.M."/>
            <person name="Rosenthal A."/>
            <person name="Cox E.C."/>
            <person name="Chisholm R.L."/>
            <person name="Gibbs R.A."/>
            <person name="Loomis W.F."/>
            <person name="Platzer M."/>
            <person name="Kay R.R."/>
            <person name="Williams J.G."/>
            <person name="Dear P.H."/>
            <person name="Noegel A.A."/>
            <person name="Barrell B.G."/>
            <person name="Kuspa A."/>
        </authorList>
    </citation>
    <scope>NUCLEOTIDE SEQUENCE [LARGE SCALE GENOMIC DNA]</scope>
    <source>
        <strain>AX4</strain>
    </source>
</reference>
<protein>
    <recommendedName>
        <fullName>Uncharacterized protein DDB_G0288805</fullName>
    </recommendedName>
</protein>
<accession>Q54IE7</accession>
<dbReference type="EMBL" id="AAFI02000125">
    <property type="protein sequence ID" value="EAL63024.1"/>
    <property type="molecule type" value="Genomic_DNA"/>
</dbReference>
<dbReference type="RefSeq" id="XP_636530.1">
    <property type="nucleotide sequence ID" value="XM_631438.1"/>
</dbReference>
<dbReference type="SMR" id="Q54IE7"/>
<dbReference type="FunCoup" id="Q54IE7">
    <property type="interactions" value="877"/>
</dbReference>
<dbReference type="STRING" id="44689.Q54IE7"/>
<dbReference type="PaxDb" id="44689-DDB0188118"/>
<dbReference type="EnsemblProtists" id="EAL63024">
    <property type="protein sequence ID" value="EAL63024"/>
    <property type="gene ID" value="DDB_G0288805"/>
</dbReference>
<dbReference type="GeneID" id="8626816"/>
<dbReference type="KEGG" id="ddi:DDB_G0288805"/>
<dbReference type="dictyBase" id="DDB_G0288805"/>
<dbReference type="VEuPathDB" id="AmoebaDB:DDB_G0288805"/>
<dbReference type="eggNOG" id="ENOG502SQE5">
    <property type="taxonomic scope" value="Eukaryota"/>
</dbReference>
<dbReference type="HOGENOM" id="CLU_327740_0_0_1"/>
<dbReference type="InParanoid" id="Q54IE7"/>
<dbReference type="OMA" id="PHPGKNY"/>
<dbReference type="PRO" id="PR:Q54IE7"/>
<dbReference type="Proteomes" id="UP000002195">
    <property type="component" value="Chromosome 5"/>
</dbReference>
<feature type="chain" id="PRO_0000346972" description="Uncharacterized protein DDB_G0288805">
    <location>
        <begin position="1"/>
        <end position="878"/>
    </location>
</feature>
<feature type="region of interest" description="Disordered" evidence="1">
    <location>
        <begin position="58"/>
        <end position="223"/>
    </location>
</feature>
<feature type="region of interest" description="Disordered" evidence="1">
    <location>
        <begin position="306"/>
        <end position="494"/>
    </location>
</feature>
<feature type="region of interest" description="Disordered" evidence="1">
    <location>
        <begin position="585"/>
        <end position="652"/>
    </location>
</feature>
<feature type="region of interest" description="Disordered" evidence="1">
    <location>
        <begin position="679"/>
        <end position="709"/>
    </location>
</feature>
<feature type="compositionally biased region" description="Low complexity" evidence="1">
    <location>
        <begin position="64"/>
        <end position="213"/>
    </location>
</feature>
<feature type="compositionally biased region" description="Low complexity" evidence="1">
    <location>
        <begin position="314"/>
        <end position="325"/>
    </location>
</feature>
<feature type="compositionally biased region" description="Low complexity" evidence="1">
    <location>
        <begin position="335"/>
        <end position="355"/>
    </location>
</feature>
<feature type="compositionally biased region" description="Polar residues" evidence="1">
    <location>
        <begin position="362"/>
        <end position="372"/>
    </location>
</feature>
<feature type="compositionally biased region" description="Low complexity" evidence="1">
    <location>
        <begin position="373"/>
        <end position="494"/>
    </location>
</feature>
<feature type="compositionally biased region" description="Basic and acidic residues" evidence="1">
    <location>
        <begin position="585"/>
        <end position="595"/>
    </location>
</feature>
<feature type="compositionally biased region" description="Low complexity" evidence="1">
    <location>
        <begin position="596"/>
        <end position="605"/>
    </location>
</feature>
<feature type="compositionally biased region" description="Acidic residues" evidence="1">
    <location>
        <begin position="615"/>
        <end position="624"/>
    </location>
</feature>
<feature type="compositionally biased region" description="Low complexity" evidence="1">
    <location>
        <begin position="639"/>
        <end position="652"/>
    </location>
</feature>
<feature type="compositionally biased region" description="Low complexity" evidence="1">
    <location>
        <begin position="679"/>
        <end position="704"/>
    </location>
</feature>
<keyword id="KW-1185">Reference proteome</keyword>
<proteinExistence type="predicted"/>
<sequence>MKIVNVESTFNIHNLHFFLYETFILIPRQTPIQFGLQFFKFGGKRDYDEACEDWDPSIGVDQTNGNSNFNNEFSNNGIDSSNGNFNQFNTNTNNNNNNNNNNINSNLNNGLNINSNNNNNNNNNNNLINNSNNNNNNNNNSLSTSLSNNSVPLTISSNNQNSLVPSNNNNNSTNNNNNNNNNNNNSTTNNTSTTTTTGSTSTSITTTTTSGTSKKGERKRTKFPEEEVKVLCDLVILFGKDVRTILTFKPFSGGKYSERQIYDKVRALKRTGLVPTNPTSDDIKKSRFDLGIADNVDIQSLKSTKKGRLSNYVSNSSQSSDSDYSSSDHEDDDYIPNSTLSSSSTLPIPSNPNSNKRLIISRNPNQLSSTNVNNNINNSGGSSNNNNNSNSINNNNNNNINNINNNNNNINNNNSNNNNNNNNNINNNNNSNNSNSIHNNNNNSNNNNNNNNNNNNNNNNNNNNNNNIINSNSNNNNNNSNGNITPTTPVTSSRRSIQILQENANHLISQIQNQMSTTPPITPTSHHNAIPIQSLSNEIINTPSRTRERDRIEKEKEKLEKERLEKLEQKEKERLEKLEKKNQQKLLEQQKEQQQKEQQQQQKQQKNNRHHLDLTDDEDEDDDENSLKSDNSNNEKDVNLSNNSSNKGSGKLNLTGNSVFDYYSTGHNLSLYKSIKTSPSSMVTIPSPSSSCSSTSSIIGSSSSSGGGGGSSGVIGISSKYNYSFNPFTTTSITSLLPTTVNSNSNSSGNGSSNNSTPIVNVISTSNSNSNSNSFFKYETDNNLFIYYPFFNQNTNSNNYTFERDLLTLTVEVPSIFDWIKDKQPQNIDKKIKIEFPHPGKNYGPPRKVNKLPEGINGVGFIFEKIKQGSVDFDISIL</sequence>